<reference key="1">
    <citation type="journal article" date="2002" name="Nature">
        <title>Genome sequence of the plant pathogen Ralstonia solanacearum.</title>
        <authorList>
            <person name="Salanoubat M."/>
            <person name="Genin S."/>
            <person name="Artiguenave F."/>
            <person name="Gouzy J."/>
            <person name="Mangenot S."/>
            <person name="Arlat M."/>
            <person name="Billault A."/>
            <person name="Brottier P."/>
            <person name="Camus J.-C."/>
            <person name="Cattolico L."/>
            <person name="Chandler M."/>
            <person name="Choisne N."/>
            <person name="Claudel-Renard C."/>
            <person name="Cunnac S."/>
            <person name="Demange N."/>
            <person name="Gaspin C."/>
            <person name="Lavie M."/>
            <person name="Moisan A."/>
            <person name="Robert C."/>
            <person name="Saurin W."/>
            <person name="Schiex T."/>
            <person name="Siguier P."/>
            <person name="Thebault P."/>
            <person name="Whalen M."/>
            <person name="Wincker P."/>
            <person name="Levy M."/>
            <person name="Weissenbach J."/>
            <person name="Boucher C.A."/>
        </authorList>
    </citation>
    <scope>NUCLEOTIDE SEQUENCE [LARGE SCALE GENOMIC DNA]</scope>
    <source>
        <strain>ATCC BAA-1114 / GMI1000</strain>
    </source>
</reference>
<feature type="chain" id="PRO_0000154372" description="N-(5'-phosphoribosyl)anthranilate isomerase">
    <location>
        <begin position="1"/>
        <end position="230"/>
    </location>
</feature>
<gene>
    <name evidence="1" type="primary">trpF</name>
    <name type="ordered locus">RSc1984</name>
    <name type="ORF">RS03413</name>
</gene>
<dbReference type="EC" id="5.3.1.24" evidence="1"/>
<dbReference type="EMBL" id="AL646052">
    <property type="protein sequence ID" value="CAD15686.1"/>
    <property type="molecule type" value="Genomic_DNA"/>
</dbReference>
<dbReference type="SMR" id="Q8XXX9"/>
<dbReference type="STRING" id="267608.RSc1984"/>
<dbReference type="EnsemblBacteria" id="CAD15686">
    <property type="protein sequence ID" value="CAD15686"/>
    <property type="gene ID" value="RSc1984"/>
</dbReference>
<dbReference type="KEGG" id="rso:RSc1984"/>
<dbReference type="eggNOG" id="COG0135">
    <property type="taxonomic scope" value="Bacteria"/>
</dbReference>
<dbReference type="HOGENOM" id="CLU_076364_2_0_4"/>
<dbReference type="UniPathway" id="UPA00035">
    <property type="reaction ID" value="UER00042"/>
</dbReference>
<dbReference type="Proteomes" id="UP000001436">
    <property type="component" value="Chromosome"/>
</dbReference>
<dbReference type="GO" id="GO:0004640">
    <property type="term" value="F:phosphoribosylanthranilate isomerase activity"/>
    <property type="evidence" value="ECO:0007669"/>
    <property type="project" value="UniProtKB-UniRule"/>
</dbReference>
<dbReference type="GO" id="GO:0000162">
    <property type="term" value="P:L-tryptophan biosynthetic process"/>
    <property type="evidence" value="ECO:0007669"/>
    <property type="project" value="UniProtKB-UniRule"/>
</dbReference>
<dbReference type="CDD" id="cd00405">
    <property type="entry name" value="PRAI"/>
    <property type="match status" value="1"/>
</dbReference>
<dbReference type="Gene3D" id="3.20.20.70">
    <property type="entry name" value="Aldolase class I"/>
    <property type="match status" value="1"/>
</dbReference>
<dbReference type="HAMAP" id="MF_00135">
    <property type="entry name" value="PRAI"/>
    <property type="match status" value="1"/>
</dbReference>
<dbReference type="InterPro" id="IPR013785">
    <property type="entry name" value="Aldolase_TIM"/>
</dbReference>
<dbReference type="InterPro" id="IPR001240">
    <property type="entry name" value="PRAI_dom"/>
</dbReference>
<dbReference type="InterPro" id="IPR011060">
    <property type="entry name" value="RibuloseP-bd_barrel"/>
</dbReference>
<dbReference type="InterPro" id="IPR044643">
    <property type="entry name" value="TrpF_fam"/>
</dbReference>
<dbReference type="NCBIfam" id="NF002298">
    <property type="entry name" value="PRK01222.1-4"/>
    <property type="match status" value="1"/>
</dbReference>
<dbReference type="NCBIfam" id="NF002299">
    <property type="entry name" value="PRK01222.1-6"/>
    <property type="match status" value="1"/>
</dbReference>
<dbReference type="PANTHER" id="PTHR42894">
    <property type="entry name" value="N-(5'-PHOSPHORIBOSYL)ANTHRANILATE ISOMERASE"/>
    <property type="match status" value="1"/>
</dbReference>
<dbReference type="PANTHER" id="PTHR42894:SF1">
    <property type="entry name" value="N-(5'-PHOSPHORIBOSYL)ANTHRANILATE ISOMERASE"/>
    <property type="match status" value="1"/>
</dbReference>
<dbReference type="Pfam" id="PF00697">
    <property type="entry name" value="PRAI"/>
    <property type="match status" value="1"/>
</dbReference>
<dbReference type="SUPFAM" id="SSF51366">
    <property type="entry name" value="Ribulose-phoshate binding barrel"/>
    <property type="match status" value="1"/>
</dbReference>
<sequence length="230" mass="24260">MPLHRTRIKLCGLTQPDDVDHAVALGADAIGLVFYPPSPRYVATGRAAELARRAGPFVTVTGLFVNASADDVARVLDQVPLTLLQFHGDETPEQCAEIAGKVGLPWLRALRVQPGTDLVEFADRFAAAQGLLLDAFVEGYGGGGHVFDWTLIPPQWLSQSAPPSAAPRLVLSGGLSAQNVAGAIERVRPYAVDVSSGIEAARGVKDRARMTAFVRAVREADAALGASVQA</sequence>
<name>TRPF_RALN1</name>
<comment type="catalytic activity">
    <reaction evidence="1">
        <text>N-(5-phospho-beta-D-ribosyl)anthranilate = 1-(2-carboxyphenylamino)-1-deoxy-D-ribulose 5-phosphate</text>
        <dbReference type="Rhea" id="RHEA:21540"/>
        <dbReference type="ChEBI" id="CHEBI:18277"/>
        <dbReference type="ChEBI" id="CHEBI:58613"/>
        <dbReference type="EC" id="5.3.1.24"/>
    </reaction>
</comment>
<comment type="pathway">
    <text evidence="1">Amino-acid biosynthesis; L-tryptophan biosynthesis; L-tryptophan from chorismate: step 3/5.</text>
</comment>
<comment type="similarity">
    <text evidence="1">Belongs to the TrpF family.</text>
</comment>
<evidence type="ECO:0000255" key="1">
    <source>
        <dbReference type="HAMAP-Rule" id="MF_00135"/>
    </source>
</evidence>
<keyword id="KW-0028">Amino-acid biosynthesis</keyword>
<keyword id="KW-0057">Aromatic amino acid biosynthesis</keyword>
<keyword id="KW-0413">Isomerase</keyword>
<keyword id="KW-1185">Reference proteome</keyword>
<keyword id="KW-0822">Tryptophan biosynthesis</keyword>
<organism>
    <name type="scientific">Ralstonia nicotianae (strain ATCC BAA-1114 / GMI1000)</name>
    <name type="common">Ralstonia solanacearum</name>
    <dbReference type="NCBI Taxonomy" id="267608"/>
    <lineage>
        <taxon>Bacteria</taxon>
        <taxon>Pseudomonadati</taxon>
        <taxon>Pseudomonadota</taxon>
        <taxon>Betaproteobacteria</taxon>
        <taxon>Burkholderiales</taxon>
        <taxon>Burkholderiaceae</taxon>
        <taxon>Ralstonia</taxon>
        <taxon>Ralstonia solanacearum species complex</taxon>
    </lineage>
</organism>
<protein>
    <recommendedName>
        <fullName evidence="1">N-(5'-phosphoribosyl)anthranilate isomerase</fullName>
        <shortName evidence="1">PRAI</shortName>
        <ecNumber evidence="1">5.3.1.24</ecNumber>
    </recommendedName>
</protein>
<accession>Q8XXX9</accession>
<proteinExistence type="inferred from homology"/>